<accession>Q5E897</accession>
<keyword id="KW-1185">Reference proteome</keyword>
<keyword id="KW-0687">Ribonucleoprotein</keyword>
<keyword id="KW-0689">Ribosomal protein</keyword>
<keyword id="KW-0694">RNA-binding</keyword>
<keyword id="KW-0699">rRNA-binding</keyword>
<sequence length="166" mass="17494">MAKEQQQATDLNEKLIAVNRVSKTVKGGRIFSFTALTVVGDGNGRVGFGYGKAREVPAAIQKSMEKARRNMFTIALNEGTLHHAVKGRHTGSKVYMQPAAEGTGIIAGGAMRAVLEVVGVRNVLAKAYGSTNPINVVRATIAGLSSVKSPEMVAAKRGLTVESISE</sequence>
<comment type="function">
    <text evidence="1">With S4 and S12 plays an important role in translational accuracy.</text>
</comment>
<comment type="function">
    <text evidence="1">Located at the back of the 30S subunit body where it stabilizes the conformation of the head with respect to the body.</text>
</comment>
<comment type="subunit">
    <text evidence="1">Part of the 30S ribosomal subunit. Contacts proteins S4 and S8.</text>
</comment>
<comment type="domain">
    <text>The N-terminal domain interacts with the head of the 30S subunit; the C-terminal domain interacts with the body and contacts protein S4. The interaction surface between S4 and S5 is involved in control of translational fidelity.</text>
</comment>
<comment type="similarity">
    <text evidence="1">Belongs to the universal ribosomal protein uS5 family.</text>
</comment>
<protein>
    <recommendedName>
        <fullName evidence="1">Small ribosomal subunit protein uS5</fullName>
    </recommendedName>
    <alternativeName>
        <fullName evidence="2">30S ribosomal protein S5</fullName>
    </alternativeName>
</protein>
<evidence type="ECO:0000255" key="1">
    <source>
        <dbReference type="HAMAP-Rule" id="MF_01307"/>
    </source>
</evidence>
<evidence type="ECO:0000305" key="2"/>
<name>RS5_ALIF1</name>
<organism>
    <name type="scientific">Aliivibrio fischeri (strain ATCC 700601 / ES114)</name>
    <name type="common">Vibrio fischeri</name>
    <dbReference type="NCBI Taxonomy" id="312309"/>
    <lineage>
        <taxon>Bacteria</taxon>
        <taxon>Pseudomonadati</taxon>
        <taxon>Pseudomonadota</taxon>
        <taxon>Gammaproteobacteria</taxon>
        <taxon>Vibrionales</taxon>
        <taxon>Vibrionaceae</taxon>
        <taxon>Aliivibrio</taxon>
    </lineage>
</organism>
<feature type="chain" id="PRO_0000131628" description="Small ribosomal subunit protein uS5">
    <location>
        <begin position="1"/>
        <end position="166"/>
    </location>
</feature>
<feature type="domain" description="S5 DRBM" evidence="1">
    <location>
        <begin position="11"/>
        <end position="74"/>
    </location>
</feature>
<proteinExistence type="inferred from homology"/>
<reference key="1">
    <citation type="journal article" date="2005" name="Proc. Natl. Acad. Sci. U.S.A.">
        <title>Complete genome sequence of Vibrio fischeri: a symbiotic bacterium with pathogenic congeners.</title>
        <authorList>
            <person name="Ruby E.G."/>
            <person name="Urbanowski M."/>
            <person name="Campbell J."/>
            <person name="Dunn A."/>
            <person name="Faini M."/>
            <person name="Gunsalus R."/>
            <person name="Lostroh P."/>
            <person name="Lupp C."/>
            <person name="McCann J."/>
            <person name="Millikan D."/>
            <person name="Schaefer A."/>
            <person name="Stabb E."/>
            <person name="Stevens A."/>
            <person name="Visick K."/>
            <person name="Whistler C."/>
            <person name="Greenberg E.P."/>
        </authorList>
    </citation>
    <scope>NUCLEOTIDE SEQUENCE [LARGE SCALE GENOMIC DNA]</scope>
    <source>
        <strain>ATCC 700601 / ES114</strain>
    </source>
</reference>
<dbReference type="EMBL" id="CP000020">
    <property type="protein sequence ID" value="AAW84749.1"/>
    <property type="molecule type" value="Genomic_DNA"/>
</dbReference>
<dbReference type="RefSeq" id="WP_005417255.1">
    <property type="nucleotide sequence ID" value="NZ_CAWLES010000001.1"/>
</dbReference>
<dbReference type="RefSeq" id="YP_203637.1">
    <property type="nucleotide sequence ID" value="NC_006840.2"/>
</dbReference>
<dbReference type="SMR" id="Q5E897"/>
<dbReference type="STRING" id="312309.VF_0254"/>
<dbReference type="EnsemblBacteria" id="AAW84749">
    <property type="protein sequence ID" value="AAW84749"/>
    <property type="gene ID" value="VF_0254"/>
</dbReference>
<dbReference type="GeneID" id="54162875"/>
<dbReference type="KEGG" id="vfi:VF_0254"/>
<dbReference type="PATRIC" id="fig|312309.11.peg.249"/>
<dbReference type="eggNOG" id="COG0098">
    <property type="taxonomic scope" value="Bacteria"/>
</dbReference>
<dbReference type="HOGENOM" id="CLU_065898_2_2_6"/>
<dbReference type="OrthoDB" id="9809045at2"/>
<dbReference type="Proteomes" id="UP000000537">
    <property type="component" value="Chromosome I"/>
</dbReference>
<dbReference type="GO" id="GO:0015935">
    <property type="term" value="C:small ribosomal subunit"/>
    <property type="evidence" value="ECO:0007669"/>
    <property type="project" value="InterPro"/>
</dbReference>
<dbReference type="GO" id="GO:0019843">
    <property type="term" value="F:rRNA binding"/>
    <property type="evidence" value="ECO:0007669"/>
    <property type="project" value="UniProtKB-UniRule"/>
</dbReference>
<dbReference type="GO" id="GO:0003735">
    <property type="term" value="F:structural constituent of ribosome"/>
    <property type="evidence" value="ECO:0007669"/>
    <property type="project" value="InterPro"/>
</dbReference>
<dbReference type="GO" id="GO:0006412">
    <property type="term" value="P:translation"/>
    <property type="evidence" value="ECO:0007669"/>
    <property type="project" value="UniProtKB-UniRule"/>
</dbReference>
<dbReference type="FunFam" id="3.30.160.20:FF:000001">
    <property type="entry name" value="30S ribosomal protein S5"/>
    <property type="match status" value="1"/>
</dbReference>
<dbReference type="FunFam" id="3.30.230.10:FF:000002">
    <property type="entry name" value="30S ribosomal protein S5"/>
    <property type="match status" value="1"/>
</dbReference>
<dbReference type="Gene3D" id="3.30.160.20">
    <property type="match status" value="1"/>
</dbReference>
<dbReference type="Gene3D" id="3.30.230.10">
    <property type="match status" value="1"/>
</dbReference>
<dbReference type="HAMAP" id="MF_01307_B">
    <property type="entry name" value="Ribosomal_uS5_B"/>
    <property type="match status" value="1"/>
</dbReference>
<dbReference type="InterPro" id="IPR020568">
    <property type="entry name" value="Ribosomal_Su5_D2-typ_SF"/>
</dbReference>
<dbReference type="InterPro" id="IPR000851">
    <property type="entry name" value="Ribosomal_uS5"/>
</dbReference>
<dbReference type="InterPro" id="IPR005712">
    <property type="entry name" value="Ribosomal_uS5_bac-type"/>
</dbReference>
<dbReference type="InterPro" id="IPR005324">
    <property type="entry name" value="Ribosomal_uS5_C"/>
</dbReference>
<dbReference type="InterPro" id="IPR013810">
    <property type="entry name" value="Ribosomal_uS5_N"/>
</dbReference>
<dbReference type="InterPro" id="IPR018192">
    <property type="entry name" value="Ribosomal_uS5_N_CS"/>
</dbReference>
<dbReference type="InterPro" id="IPR014721">
    <property type="entry name" value="Ribsml_uS5_D2-typ_fold_subgr"/>
</dbReference>
<dbReference type="NCBIfam" id="TIGR01021">
    <property type="entry name" value="rpsE_bact"/>
    <property type="match status" value="1"/>
</dbReference>
<dbReference type="PANTHER" id="PTHR48277">
    <property type="entry name" value="MITOCHONDRIAL RIBOSOMAL PROTEIN S5"/>
    <property type="match status" value="1"/>
</dbReference>
<dbReference type="PANTHER" id="PTHR48277:SF1">
    <property type="entry name" value="MITOCHONDRIAL RIBOSOMAL PROTEIN S5"/>
    <property type="match status" value="1"/>
</dbReference>
<dbReference type="Pfam" id="PF00333">
    <property type="entry name" value="Ribosomal_S5"/>
    <property type="match status" value="1"/>
</dbReference>
<dbReference type="Pfam" id="PF03719">
    <property type="entry name" value="Ribosomal_S5_C"/>
    <property type="match status" value="1"/>
</dbReference>
<dbReference type="SUPFAM" id="SSF54768">
    <property type="entry name" value="dsRNA-binding domain-like"/>
    <property type="match status" value="1"/>
</dbReference>
<dbReference type="SUPFAM" id="SSF54211">
    <property type="entry name" value="Ribosomal protein S5 domain 2-like"/>
    <property type="match status" value="1"/>
</dbReference>
<dbReference type="PROSITE" id="PS00585">
    <property type="entry name" value="RIBOSOMAL_S5"/>
    <property type="match status" value="1"/>
</dbReference>
<dbReference type="PROSITE" id="PS50881">
    <property type="entry name" value="S5_DSRBD"/>
    <property type="match status" value="1"/>
</dbReference>
<gene>
    <name evidence="1" type="primary">rpsE</name>
    <name type="ordered locus">VF_0254</name>
</gene>